<feature type="signal peptide" evidence="1">
    <location>
        <begin position="1"/>
        <end position="23"/>
    </location>
</feature>
<feature type="chain" id="PRO_0000244699" description="Envelope glycoprotein gp160" evidence="1">
    <location>
        <begin position="24"/>
        <end position="842"/>
    </location>
</feature>
<feature type="chain" id="PRO_0000244700" description="Surface protein gp120" evidence="1">
    <location>
        <begin position="24"/>
        <end position="488"/>
    </location>
</feature>
<feature type="chain" id="PRO_0000244701" description="Transmembrane protein gp41" evidence="1">
    <location>
        <begin position="489"/>
        <end position="842"/>
    </location>
</feature>
<feature type="topological domain" description="Extracellular" evidence="1">
    <location>
        <begin position="24"/>
        <end position="663"/>
    </location>
</feature>
<feature type="transmembrane region" description="Helical" evidence="1">
    <location>
        <begin position="664"/>
        <end position="684"/>
    </location>
</feature>
<feature type="topological domain" description="Cytoplasmic" evidence="1">
    <location>
        <begin position="685"/>
        <end position="842"/>
    </location>
</feature>
<feature type="region of interest" description="V1" evidence="1">
    <location>
        <begin position="122"/>
        <end position="149"/>
    </location>
</feature>
<feature type="region of interest" description="V2" evidence="1">
    <location>
        <begin position="150"/>
        <end position="189"/>
    </location>
</feature>
<feature type="region of interest" description="V3" evidence="1">
    <location>
        <begin position="285"/>
        <end position="318"/>
    </location>
</feature>
<feature type="region of interest" description="CD4-binding loop" evidence="1">
    <location>
        <begin position="353"/>
        <end position="363"/>
    </location>
</feature>
<feature type="region of interest" description="V4" evidence="1">
    <location>
        <begin position="374"/>
        <end position="396"/>
    </location>
</feature>
<feature type="region of interest" description="V5">
    <location>
        <begin position="439"/>
        <end position="448"/>
    </location>
</feature>
<feature type="region of interest" description="V5" evidence="1">
    <location>
        <begin position="441"/>
        <end position="448"/>
    </location>
</feature>
<feature type="region of interest" description="Fusion peptide" evidence="1">
    <location>
        <begin position="489"/>
        <end position="510"/>
    </location>
</feature>
<feature type="region of interest" description="Immunosuppression" evidence="1">
    <location>
        <begin position="552"/>
        <end position="570"/>
    </location>
</feature>
<feature type="region of interest" description="MPER; binding to GalCer" evidence="1">
    <location>
        <begin position="641"/>
        <end position="662"/>
    </location>
</feature>
<feature type="coiled-coil region" evidence="1">
    <location>
        <begin position="612"/>
        <end position="646"/>
    </location>
</feature>
<feature type="short sequence motif" description="YXXL motif; contains endocytosis signal" evidence="1">
    <location>
        <begin position="691"/>
        <end position="694"/>
    </location>
</feature>
<feature type="site" description="Cleavage; by host furin" evidence="1">
    <location>
        <begin position="488"/>
        <end position="489"/>
    </location>
</feature>
<feature type="glycosylation site" description="N-linked (GlcNAc...) asparagine; by host" evidence="1">
    <location>
        <position position="79"/>
    </location>
</feature>
<feature type="glycosylation site" description="N-linked (GlcNAc...) asparagine; by host" evidence="1">
    <location>
        <position position="123"/>
    </location>
</feature>
<feature type="glycosylation site" description="N-linked (GlcNAc...) asparagine; by host" evidence="1">
    <location>
        <position position="131"/>
    </location>
</feature>
<feature type="glycosylation site" description="N-linked (GlcNAc...) asparagine; by host" evidence="1">
    <location>
        <position position="134"/>
    </location>
</feature>
<feature type="glycosylation site" description="N-linked (GlcNAc...) asparagine; by host" evidence="1">
    <location>
        <position position="149"/>
    </location>
</feature>
<feature type="glycosylation site" description="N-linked (GlcNAc...) asparagine; by host" evidence="1">
    <location>
        <position position="153"/>
    </location>
</feature>
<feature type="glycosylation site" description="N-linked (GlcNAc...) asparagine; by host" evidence="1">
    <location>
        <position position="181"/>
    </location>
</feature>
<feature type="glycosylation site" description="N-linked (GlcNAc...) asparagine; by host" evidence="1">
    <location>
        <position position="190"/>
    </location>
</feature>
<feature type="glycosylation site" description="N-linked (GlcNAc...) asparagine; by host" evidence="1">
    <location>
        <position position="225"/>
    </location>
</feature>
<feature type="glycosylation site" description="N-linked (GlcNAc...) asparagine; by host" evidence="1">
    <location>
        <position position="229"/>
    </location>
</feature>
<feature type="glycosylation site" description="N-linked (GlcNAc...) asparagine; by host" evidence="1">
    <location>
        <position position="234"/>
    </location>
</feature>
<feature type="glycosylation site" description="N-linked (GlcNAc...) asparagine; by host" evidence="1">
    <location>
        <position position="255"/>
    </location>
</feature>
<feature type="glycosylation site" description="N-linked (GlcNAc...) asparagine; by host" evidence="1">
    <location>
        <position position="267"/>
    </location>
</feature>
<feature type="glycosylation site" description="N-linked (GlcNAc...) asparagine; by host" evidence="1">
    <location>
        <position position="278"/>
    </location>
</feature>
<feature type="glycosylation site" description="N-linked (GlcNAc...) asparagine; by host" evidence="1">
    <location>
        <position position="284"/>
    </location>
</feature>
<feature type="glycosylation site" description="N-linked (GlcNAc...) asparagine; by host" evidence="1">
    <location>
        <position position="290"/>
    </location>
</feature>
<feature type="glycosylation site" description="N-linked (GlcNAc...) asparagine; by host" evidence="1">
    <location>
        <position position="320"/>
    </location>
</feature>
<feature type="glycosylation site" description="N-linked (GlcNAc...) asparagine; by host" evidence="1">
    <location>
        <position position="331"/>
    </location>
</feature>
<feature type="glycosylation site" description="N-linked (GlcNAc...) asparagine; by host" evidence="1">
    <location>
        <position position="345"/>
    </location>
</feature>
<feature type="glycosylation site" description="N-linked (GlcNAc...) asparagine; by host" evidence="1">
    <location>
        <position position="375"/>
    </location>
</feature>
<feature type="glycosylation site" description="N-linked (GlcNAc...) asparagine; by host" evidence="1">
    <location>
        <position position="386"/>
    </location>
</feature>
<feature type="glycosylation site" description="N-linked (GlcNAc...) asparagine; by host" evidence="1">
    <location>
        <position position="422"/>
    </location>
</feature>
<feature type="glycosylation site" description="N-linked (GlcNAc...) asparagine; by host" evidence="1">
    <location>
        <position position="426"/>
    </location>
</feature>
<feature type="glycosylation site" description="N-linked (GlcNAc...) asparagine; by host" evidence="1">
    <location>
        <position position="589"/>
    </location>
</feature>
<feature type="glycosylation site" description="N-linked (GlcNAc...) asparagine; by host" evidence="1">
    <location>
        <position position="594"/>
    </location>
</feature>
<feature type="glycosylation site" description="N-linked (GlcNAc...) asparagine; by host" evidence="1">
    <location>
        <position position="595"/>
    </location>
</feature>
<feature type="glycosylation site" description="N-linked (GlcNAc...) asparagine; by host" evidence="1">
    <location>
        <position position="604"/>
    </location>
</feature>
<feature type="glycosylation site" description="N-linked (GlcNAc...) asparagine; by host" evidence="1">
    <location>
        <position position="616"/>
    </location>
</feature>
<feature type="disulfide bond" evidence="1">
    <location>
        <begin position="45"/>
        <end position="65"/>
    </location>
</feature>
<feature type="disulfide bond" evidence="1">
    <location>
        <begin position="110"/>
        <end position="198"/>
    </location>
</feature>
<feature type="disulfide bond" evidence="1">
    <location>
        <begin position="117"/>
        <end position="189"/>
    </location>
</feature>
<feature type="disulfide bond" evidence="1">
    <location>
        <begin position="122"/>
        <end position="150"/>
    </location>
</feature>
<feature type="disulfide bond" evidence="1">
    <location>
        <begin position="211"/>
        <end position="240"/>
    </location>
</feature>
<feature type="disulfide bond" evidence="1">
    <location>
        <begin position="221"/>
        <end position="232"/>
    </location>
</feature>
<feature type="disulfide bond" evidence="1">
    <location>
        <begin position="285"/>
        <end position="319"/>
    </location>
</feature>
<feature type="disulfide bond" evidence="1">
    <location>
        <begin position="367"/>
        <end position="423"/>
    </location>
</feature>
<feature type="disulfide bond" evidence="1">
    <location>
        <begin position="374"/>
        <end position="396"/>
    </location>
</feature>
<feature type="disulfide bond" evidence="1">
    <location>
        <begin position="576"/>
        <end position="582"/>
    </location>
</feature>
<gene>
    <name evidence="1" type="primary">env</name>
</gene>
<organism>
    <name type="scientific">Human immunodeficiency virus type 1 group N (isolate YBF30)</name>
    <name type="common">HIV-1</name>
    <dbReference type="NCBI Taxonomy" id="388818"/>
    <lineage>
        <taxon>Viruses</taxon>
        <taxon>Riboviria</taxon>
        <taxon>Pararnavirae</taxon>
        <taxon>Artverviricota</taxon>
        <taxon>Revtraviricetes</taxon>
        <taxon>Ortervirales</taxon>
        <taxon>Retroviridae</taxon>
        <taxon>Orthoretrovirinae</taxon>
        <taxon>Lentivirus</taxon>
        <taxon>Human immunodeficiency virus type 1</taxon>
    </lineage>
</organism>
<proteinExistence type="inferred from homology"/>
<keyword id="KW-0014">AIDS</keyword>
<keyword id="KW-0053">Apoptosis</keyword>
<keyword id="KW-1165">Clathrin-mediated endocytosis of virus by host</keyword>
<keyword id="KW-0165">Cleavage on pair of basic residues</keyword>
<keyword id="KW-0175">Coiled coil</keyword>
<keyword id="KW-1015">Disulfide bond</keyword>
<keyword id="KW-1170">Fusion of virus membrane with host endosomal membrane</keyword>
<keyword id="KW-1168">Fusion of virus membrane with host membrane</keyword>
<keyword id="KW-0325">Glycoprotein</keyword>
<keyword id="KW-1032">Host cell membrane</keyword>
<keyword id="KW-1039">Host endosome</keyword>
<keyword id="KW-1043">Host membrane</keyword>
<keyword id="KW-0945">Host-virus interaction</keyword>
<keyword id="KW-0449">Lipoprotein</keyword>
<keyword id="KW-0472">Membrane</keyword>
<keyword id="KW-0564">Palmitate</keyword>
<keyword id="KW-1185">Reference proteome</keyword>
<keyword id="KW-0732">Signal</keyword>
<keyword id="KW-0812">Transmembrane</keyword>
<keyword id="KW-1133">Transmembrane helix</keyword>
<keyword id="KW-1161">Viral attachment to host cell</keyword>
<keyword id="KW-0261">Viral envelope protein</keyword>
<keyword id="KW-0899">Viral immunoevasion</keyword>
<keyword id="KW-1162">Viral penetration into host cytoplasm</keyword>
<keyword id="KW-0946">Virion</keyword>
<keyword id="KW-1164">Virus endocytosis by host</keyword>
<keyword id="KW-1160">Virus entry into host cell</keyword>
<comment type="function">
    <molecule>Envelope glycoprotein gp160</molecule>
    <text evidence="1">Oligomerizes in the host endoplasmic reticulum into predominantly trimers. In a second time, gp160 transits in the host Golgi, where glycosylation is completed. The precursor is then proteolytically cleaved in the trans-Golgi and thereby activated by cellular furin or furin-like proteases to produce gp120 and gp41.</text>
</comment>
<comment type="function">
    <molecule>Surface protein gp120</molecule>
    <text evidence="1">Attaches the virus to the host lymphoid cell by binding to the primary receptor CD4. This interaction induces a structural rearrangement creating a high affinity binding site for a chemokine coreceptor like CXCR4 and/or CCR5. Acts as a ligand for CD209/DC-SIGN and CLEC4M/DC-SIGNR, which are respectively found on dendritic cells (DCs), and on endothelial cells of liver sinusoids and lymph node sinuses. These interactions allow capture of viral particles at mucosal surfaces by these cells and subsequent transmission to permissive cells. HIV subverts the migration properties of dendritic cells to gain access to CD4+ T-cells in lymph nodes. Virus transmission to permissive T-cells occurs either in trans (without DCs infection, through viral capture and transmission), or in cis (following DCs productive infection, through the usual CD4-gp120 interaction), thereby inducing a robust infection. In trans infection, bound virions remain infectious over days and it is proposed that they are not degraded, but protected in non-lysosomal acidic organelles within the DCs close to the cell membrane thus contributing to the viral infectious potential during DCs' migration from the periphery to the lymphoid tissues. On arrival at lymphoid tissues, intact virions recycle back to DCs' cell surface allowing virus transmission to CD4+ T-cells.</text>
</comment>
<comment type="function">
    <molecule>Transmembrane protein gp41</molecule>
    <text evidence="1">Acts as a class I viral fusion protein. Under the current model, the protein has at least 3 conformational states: pre-fusion native state, pre-hairpin intermediate state, and post-fusion hairpin state. During fusion of viral and target intracellular membranes, the coiled coil regions (heptad repeats) assume a trimer-of-hairpins structure, positioning the fusion peptide in close proximity to the C-terminal region of the ectodomain. The formation of this structure appears to drive apposition and subsequent fusion of viral and target cell membranes. Complete fusion occurs in host cell endosomes and is dynamin-dependent, however some lipid transfer might occur at the plasma membrane. The virus undergoes clathrin-dependent internalization long before endosomal fusion, thus minimizing the surface exposure of conserved viral epitopes during fusion and reducing the efficacy of inhibitors targeting these epitopes. Membranes fusion leads to delivery of the nucleocapsid into the cytoplasm.</text>
</comment>
<comment type="subunit">
    <molecule>Surface protein gp120</molecule>
    <text evidence="1">The mature envelope protein (Env) consists of a homotrimer of non-covalently associated gp120-gp41 heterodimers. The resulting complex protrudes from the virus surface as a spike. There seems to be as few as 10 spikes on the average virion. Interacts with host CD4, CCR5 and CXCR4. Gp120 also interacts with the C-type lectins CD209/DC-SIGN and CLEC4M/DC-SIGNR (collectively referred to as DC-SIGN(R)). Gp120 and gp41 interact with GalCer. Gp120 interacts with host ITGA4/ITGB7 complex; on CD4+ T-cells, this interaction results in rapid activation of integrin ITGAL/LFA-1, which facilitates efficient cell-to-cell spreading of HIV-1. Gp120 interacts with cell-associated heparan sulfate; this interaction increases virus infectivity on permissive cells and may be involved in infection of CD4- cells.</text>
</comment>
<comment type="subunit">
    <molecule>Transmembrane protein gp41</molecule>
    <text evidence="1">The mature envelope protein (Env) consists of a homotrimer of non-covalently associated gp120-gp41 heterodimers. The resulting complex protrudes from the virus surface as a spike. There seems to be as few as 10 spikes on the average virion.</text>
</comment>
<comment type="subcellular location">
    <molecule>Surface protein gp120</molecule>
    <subcellularLocation>
        <location evidence="1">Virion membrane</location>
        <topology evidence="1">Peripheral membrane protein</topology>
    </subcellularLocation>
    <subcellularLocation>
        <location evidence="1">Host cell membrane</location>
        <topology evidence="1">Peripheral membrane protein</topology>
    </subcellularLocation>
    <subcellularLocation>
        <location evidence="1">Host endosome membrane</location>
        <topology evidence="1">Single-pass type I membrane protein</topology>
    </subcellularLocation>
    <text evidence="1">The surface protein is not anchored to the viral envelope, but associates with the extravirion surface through its binding to TM. It is probably concentrated at the site of budding and incorporated into the virions possibly by contacts between the cytoplasmic tail of Env and the N-terminus of Gag.</text>
</comment>
<comment type="subcellular location">
    <molecule>Transmembrane protein gp41</molecule>
    <subcellularLocation>
        <location evidence="1">Virion membrane</location>
        <topology evidence="1">Single-pass type I membrane protein</topology>
    </subcellularLocation>
    <subcellularLocation>
        <location evidence="1">Host cell membrane</location>
        <topology evidence="1">Single-pass type I membrane protein</topology>
    </subcellularLocation>
    <subcellularLocation>
        <location evidence="1">Host endosome membrane</location>
        <topology evidence="1">Single-pass type I membrane protein</topology>
    </subcellularLocation>
    <text evidence="1">It is probably concentrated at the site of budding and incorporated into the virions possibly by contacts between the cytoplasmic tail of Env and the N-terminus of Gag.</text>
</comment>
<comment type="domain">
    <text evidence="1">Some of the most genetically diverse regions of the viral genome are present in Env. They are called variable regions 1 through 5 (V1 through V5). Coreceptor usage of gp120 is determined mainly by the primary structure of the third variable region (V3) in the outer domain of gp120. The sequence of V3 determines which coreceptor, CCR5 and/or CXCR4 (corresponding to R5/macrophage, X4/T cell and R5X4/T cell and macrophage tropism), is used to trigger the fusion potential of the Env complex, and hence which cells the virus can infect. Binding to CCR5 involves a region adjacent in addition to V3.</text>
</comment>
<comment type="domain">
    <text evidence="1">The membrane proximal external region (MPER) present in gp41 is a tryptophan-rich region recognized by the antibodies 2F5, Z13, and 4E10. MPER seems to play a role in fusion.</text>
</comment>
<comment type="domain">
    <text evidence="1">The 17 amino acids long immunosuppressive region is present in many retroviral envelope proteins. Synthetic peptides derived from this relatively conserved sequence inhibit immune function in vitro and in vivo.</text>
</comment>
<comment type="domain">
    <text evidence="1">The YXXL motif is involved in determining the exact site of viral release at the surface of infected mononuclear cells and promotes endocytosis. YXXL and di-leucine endocytosis motifs interact directly or indirectly with the clathrin adapter complexes, opperate independently, and their activities are not additive.</text>
</comment>
<comment type="domain">
    <text evidence="1">The CD4-binding region is targeted by the antibody b12.</text>
</comment>
<comment type="PTM">
    <text evidence="1">Highly glycosylated by host. The high number of glycan on the protein is reffered to as 'glycan shield' because it contributes to hide protein sequence from adaptive immune system.</text>
</comment>
<comment type="PTM">
    <text evidence="1">Palmitoylation of the transmembrane protein and of Env polyprotein (prior to its proteolytic cleavage) is essential for their association with host cell membrane lipid rafts. Palmitoylation is therefore required for envelope trafficking to classical lipid rafts, but not for viral replication.</text>
</comment>
<comment type="PTM">
    <text evidence="1">Specific enzymatic cleavages in vivo yield mature proteins. Envelope glycoproteins are synthesized as an inactive precursor that is heavily N-glycosylated and processed likely by host cell furin in the Golgi to yield the mature SU and TM proteins. The cleavage site between SU and TM requires the minimal sequence [KR]-X-[KR]-R. About 2 of the 9 disulfide bonds of gp41 are reduced by P4HB/PDI, following binding to CD4 receptor.</text>
</comment>
<comment type="miscellaneous">
    <text evidence="1">Inhibitors targeting HIV-1 viral envelope proteins are used as antiretroviral drugs. Attachment of virions to the cell surface via non-specific interactions and CD4 binding can be blocked by inhibitors that include cyanovirin-N, cyclotriazadisulfonamide analogs, PRO 2000, TNX 355 and PRO 542. In addition, BMS 806 can block CD4-induced conformational changes. Env interactions with the coreceptor molecules can be targeted by CCR5 antagonists including SCH-D, maraviroc (UK 427857) and aplaviroc (GW 873140), and the CXCR4 antagonist AMD 070. Fusion of viral and cellular membranes can be inhibited by peptides such as enfuvirtide and tifuvirtide (T 1249). Resistance to inhibitors associated with mutations in Env are observed. Most of the time, single mutations confer only a modest reduction in drug susceptibility. Combination of several mutations is usually required to develop a high-level drug resistance.</text>
</comment>
<comment type="miscellaneous">
    <text evidence="1">HIV-1 lineages are divided in three main groups, M (for Major), O (for Outlier), and N (for New, or Non-M, Non-O). The vast majority of strains found worldwide belong to the group M. Group O seems to be endemic to and largely confined to Cameroon and neighboring countries in West Central Africa, where these viruses represent a small minority of HIV-1 strains. The group N is represented by a limited number of isolates from Cameroonian persons. The group M is further subdivided in 9 clades or subtypes (A to D, F to H, J and K).</text>
</comment>
<comment type="similarity">
    <text evidence="1">Belongs to the HIV-1 env protein family.</text>
</comment>
<comment type="online information" name="hivdb">
    <link uri="https://hivdb.stanford.edu"/>
    <text>HIV drug resistance database</text>
</comment>
<comment type="online information" name="HIV drug resistance mutations">
    <link uri="https://www.iasusa.org/hiv-drug-resistance/hiv-drug-resistance-mutations/"/>
</comment>
<dbReference type="EMBL" id="AJ006022">
    <property type="protein sequence ID" value="CAA06816.1"/>
    <property type="molecule type" value="Genomic_DNA"/>
</dbReference>
<dbReference type="SMR" id="O91086"/>
<dbReference type="GlyCosmos" id="O91086">
    <property type="glycosylation" value="28 sites, No reported glycans"/>
</dbReference>
<dbReference type="Proteomes" id="UP000007420">
    <property type="component" value="Segment"/>
</dbReference>
<dbReference type="GO" id="GO:0044175">
    <property type="term" value="C:host cell endosome membrane"/>
    <property type="evidence" value="ECO:0007669"/>
    <property type="project" value="UniProtKB-SubCell"/>
</dbReference>
<dbReference type="GO" id="GO:0020002">
    <property type="term" value="C:host cell plasma membrane"/>
    <property type="evidence" value="ECO:0007669"/>
    <property type="project" value="UniProtKB-SubCell"/>
</dbReference>
<dbReference type="GO" id="GO:0016020">
    <property type="term" value="C:membrane"/>
    <property type="evidence" value="ECO:0007669"/>
    <property type="project" value="UniProtKB-UniRule"/>
</dbReference>
<dbReference type="GO" id="GO:0019031">
    <property type="term" value="C:viral envelope"/>
    <property type="evidence" value="ECO:0007669"/>
    <property type="project" value="UniProtKB-KW"/>
</dbReference>
<dbReference type="GO" id="GO:0055036">
    <property type="term" value="C:virion membrane"/>
    <property type="evidence" value="ECO:0007669"/>
    <property type="project" value="UniProtKB-SubCell"/>
</dbReference>
<dbReference type="GO" id="GO:0005198">
    <property type="term" value="F:structural molecule activity"/>
    <property type="evidence" value="ECO:0007669"/>
    <property type="project" value="UniProtKB-UniRule"/>
</dbReference>
<dbReference type="GO" id="GO:0075512">
    <property type="term" value="P:clathrin-dependent endocytosis of virus by host cell"/>
    <property type="evidence" value="ECO:0007669"/>
    <property type="project" value="UniProtKB-UniRule"/>
</dbReference>
<dbReference type="GO" id="GO:0039654">
    <property type="term" value="P:fusion of virus membrane with host endosome membrane"/>
    <property type="evidence" value="ECO:0007669"/>
    <property type="project" value="UniProtKB-UniRule"/>
</dbReference>
<dbReference type="GO" id="GO:0019064">
    <property type="term" value="P:fusion of virus membrane with host plasma membrane"/>
    <property type="evidence" value="ECO:0007669"/>
    <property type="project" value="UniProtKB-UniRule"/>
</dbReference>
<dbReference type="GO" id="GO:1903908">
    <property type="term" value="P:positive regulation of plasma membrane raft polarization"/>
    <property type="evidence" value="ECO:0007669"/>
    <property type="project" value="UniProtKB-UniRule"/>
</dbReference>
<dbReference type="GO" id="GO:1903911">
    <property type="term" value="P:positive regulation of receptor clustering"/>
    <property type="evidence" value="ECO:0007669"/>
    <property type="project" value="UniProtKB-UniRule"/>
</dbReference>
<dbReference type="GO" id="GO:0019082">
    <property type="term" value="P:viral protein processing"/>
    <property type="evidence" value="ECO:0007669"/>
    <property type="project" value="UniProtKB-UniRule"/>
</dbReference>
<dbReference type="GO" id="GO:0019062">
    <property type="term" value="P:virion attachment to host cell"/>
    <property type="evidence" value="ECO:0007669"/>
    <property type="project" value="UniProtKB-UniRule"/>
</dbReference>
<dbReference type="CDD" id="cd09909">
    <property type="entry name" value="HIV-1-like_HR1-HR2"/>
    <property type="match status" value="1"/>
</dbReference>
<dbReference type="FunFam" id="1.10.287.210:FF:000001">
    <property type="entry name" value="Envelope glycoprotein gp160"/>
    <property type="match status" value="1"/>
</dbReference>
<dbReference type="FunFam" id="2.170.40.20:FF:000004">
    <property type="entry name" value="Envelope glycoprotein gp160"/>
    <property type="match status" value="1"/>
</dbReference>
<dbReference type="FunFam" id="2.170.40.20:FF:000005">
    <property type="entry name" value="Envelope glycoprotein gp160"/>
    <property type="match status" value="1"/>
</dbReference>
<dbReference type="Gene3D" id="1.10.287.210">
    <property type="match status" value="1"/>
</dbReference>
<dbReference type="Gene3D" id="2.170.40.20">
    <property type="entry name" value="Human immunodeficiency virus 1, Gp160, envelope glycoprotein"/>
    <property type="match status" value="2"/>
</dbReference>
<dbReference type="Gene3D" id="1.20.5.490">
    <property type="entry name" value="Single helix bin"/>
    <property type="match status" value="1"/>
</dbReference>
<dbReference type="HAMAP" id="MF_04083">
    <property type="entry name" value="HIV_ENV"/>
    <property type="match status" value="1"/>
</dbReference>
<dbReference type="InterPro" id="IPR036377">
    <property type="entry name" value="Gp120_core_sf"/>
</dbReference>
<dbReference type="InterPro" id="IPR037527">
    <property type="entry name" value="Gp160"/>
</dbReference>
<dbReference type="InterPro" id="IPR000328">
    <property type="entry name" value="GP41-like"/>
</dbReference>
<dbReference type="InterPro" id="IPR000777">
    <property type="entry name" value="HIV1_Gp120"/>
</dbReference>
<dbReference type="Pfam" id="PF00516">
    <property type="entry name" value="GP120"/>
    <property type="match status" value="1"/>
</dbReference>
<dbReference type="Pfam" id="PF00517">
    <property type="entry name" value="GP41"/>
    <property type="match status" value="1"/>
</dbReference>
<dbReference type="SUPFAM" id="SSF56502">
    <property type="entry name" value="gp120 core"/>
    <property type="match status" value="2"/>
</dbReference>
<dbReference type="SUPFAM" id="SSF58069">
    <property type="entry name" value="Virus ectodomain"/>
    <property type="match status" value="1"/>
</dbReference>
<sequence>MGMKSGWLLFYLLVSLIKVIGSEQHWVTVYYGVPVWREAETTLFCASDAKAHSTEAHNIWATQACVPTDPNPQEVLLPNVTEKFNMWENKMADQMQEDIISLWEQSLKPCVKLTPLCVTMLCNDSYGEERNNTNMTTREPDIGYKQMKNCSFNATTELTDKKKQVYSLFYVEDVVPINAYNKTYRLINCNTTAVTQACPKTSFEPIPIHYCAPPGFAIMKCNEGNFSGNGSCTNVSTVQCTHGIKPVISTQLILNGSLNTDGIVIRNDSHSNLLVQWNETVPINCTRPGNNTGGQVQIGPAMTFYNIEKIVGDIRQAYCNVSKELWEPMWNRTREEIKKILGKNNITFRARERNEGDLEVTHLMFNCRGEFFYCNTSKLFNEELLNETGEPITLPCRIRQIVNLWTRVGKGIYAPPIRGVLNCTSNITGLVLEYSGGPDTKETIVYPSGGNMVNLWRQELYKYKVVSIEPIGVAPGKAKRRTVSREKRAAFGLGALFLGFLGAAGSTMGAASITLTVQARTLLSGIVQQQNILLRAIEAQQHLLQLSIWGIKQLQAKVLAIERYLRDQQILSLWGCSGKTICYTTVPWNETWSNNTSYDTIWNNLTWQQWDEKVRNYSGVIFGLIEQAQEQQNTNEKSLLELDQWDSLWSWFGITKWLWYIKIAIMIVAGIVGIRIISIVITIIARVRQGYSPLSLQTLIPTARGPDRPEETEGGVGEQDRGRSVRLVSGFSALVWEDLRNLLIFLYHRLTDSLLILRRTLELLGQSLSRGLQLLNELRTHLWGILAYWGKELRDSAISLLNTTAIVVAEGTDRIIELAQRIGRGILHIPRRIRQGLERALI</sequence>
<reference key="1">
    <citation type="journal article" date="1998" name="Nat. Med.">
        <title>Identification of a new human immunodeficiency virus type 1 distinct from group M and group O.</title>
        <authorList>
            <person name="Simon F."/>
            <person name="Mauclere P."/>
            <person name="Roques P."/>
            <person name="Loussert-Ajaka I."/>
            <person name="Muller-Trutwin M.C."/>
            <person name="Saragosti S."/>
            <person name="Georges-Courbot M.C."/>
            <person name="Barre-Sinoussi F."/>
            <person name="Brun-Vezinet F."/>
        </authorList>
    </citation>
    <scope>NUCLEOTIDE SEQUENCE [GENOMIC DNA]</scope>
</reference>
<reference key="2">
    <citation type="journal article" date="2003" name="APMIS">
        <title>Pathogens target DC-SIGN to influence their fate DC-SIGN functions as a pathogen receptor with broad specificity.</title>
        <authorList>
            <person name="Geijtenbeek T.B."/>
            <person name="van Kooyk Y."/>
        </authorList>
    </citation>
    <scope>REVIEW</scope>
</reference>
<reference key="3">
    <citation type="journal article" date="2003" name="Biochim. Biophys. Acta">
        <title>The HIV Env-mediated fusion reaction.</title>
        <authorList>
            <person name="Gallo S.A."/>
            <person name="Finnegan C.M."/>
            <person name="Viard M."/>
            <person name="Raviv Y."/>
            <person name="Dimitrov A."/>
            <person name="Rawat S.S."/>
            <person name="Puri A."/>
            <person name="Durell S."/>
            <person name="Blumenthal R."/>
        </authorList>
    </citation>
    <scope>REVIEW</scope>
</reference>
<reference key="4">
    <citation type="journal article" date="2005" name="Cell Death Differ.">
        <title>Mechanisms of apoptosis induction by the HIV-1 envelope.</title>
        <authorList>
            <person name="Perfettini J.-L."/>
            <person name="Castedo M."/>
            <person name="Roumier T."/>
            <person name="Andreau K."/>
            <person name="Nardacci R."/>
            <person name="Piacentini M."/>
            <person name="Kroemer G."/>
        </authorList>
    </citation>
    <scope>REVIEW</scope>
</reference>
<reference key="5">
    <citation type="journal article" date="2005" name="AIDS Res. Hum. Retroviruses">
        <title>V3: HIV's switch-hitter.</title>
        <authorList>
            <person name="Hartley O."/>
            <person name="Klasse P.J."/>
            <person name="Sattentau Q.J."/>
            <person name="Moore J.P."/>
        </authorList>
    </citation>
    <scope>REVIEW</scope>
</reference>
<reference key="6">
    <citation type="journal article" date="2005" name="Drugs">
        <title>Emerging drug targets for antiretroviral therapy.</title>
        <authorList>
            <person name="Reeves J.D."/>
            <person name="Piefer A.J."/>
        </authorList>
    </citation>
    <scope>REVIEW</scope>
</reference>
<reference key="7">
    <citation type="journal article" date="2006" name="EMBO J.">
        <title>HIV and the chemokine system: 10 years later.</title>
        <authorList>
            <person name="Lusso P."/>
        </authorList>
    </citation>
    <scope>REVIEW</scope>
</reference>
<evidence type="ECO:0000255" key="1">
    <source>
        <dbReference type="HAMAP-Rule" id="MF_04083"/>
    </source>
</evidence>
<protein>
    <recommendedName>
        <fullName evidence="1">Envelope glycoprotein gp160</fullName>
    </recommendedName>
    <alternativeName>
        <fullName evidence="1">Env polyprotein</fullName>
    </alternativeName>
    <component>
        <recommendedName>
            <fullName evidence="1">Surface protein gp120</fullName>
            <shortName evidence="1">SU</shortName>
        </recommendedName>
        <alternativeName>
            <fullName evidence="1">Glycoprotein 120</fullName>
            <shortName evidence="1">gp120</shortName>
        </alternativeName>
    </component>
    <component>
        <recommendedName>
            <fullName evidence="1">Transmembrane protein gp41</fullName>
            <shortName evidence="1">TM</shortName>
        </recommendedName>
        <alternativeName>
            <fullName evidence="1">Glycoprotein 41</fullName>
            <shortName evidence="1">gp41</shortName>
        </alternativeName>
    </component>
</protein>
<organismHost>
    <name type="scientific">Homo sapiens</name>
    <name type="common">Human</name>
    <dbReference type="NCBI Taxonomy" id="9606"/>
</organismHost>
<accession>O91086</accession>
<name>ENV_HV1YF</name>